<protein>
    <recommendedName>
        <fullName evidence="1">NADPH-dependent 7-cyano-7-deazaguanine reductase</fullName>
        <ecNumber evidence="1">1.7.1.13</ecNumber>
    </recommendedName>
    <alternativeName>
        <fullName evidence="1">7-cyano-7-carbaguanine reductase</fullName>
    </alternativeName>
    <alternativeName>
        <fullName evidence="1">NADPH-dependent nitrile oxidoreductase</fullName>
    </alternativeName>
    <alternativeName>
        <fullName evidence="1">PreQ(0) reductase</fullName>
    </alternativeName>
</protein>
<feature type="chain" id="PRO_0000163004" description="NADPH-dependent 7-cyano-7-deazaguanine reductase">
    <location>
        <begin position="1"/>
        <end position="162"/>
    </location>
</feature>
<feature type="active site" description="Thioimide intermediate" evidence="1">
    <location>
        <position position="53"/>
    </location>
</feature>
<feature type="active site" description="Proton donor" evidence="1">
    <location>
        <position position="60"/>
    </location>
</feature>
<feature type="binding site" evidence="1">
    <location>
        <begin position="75"/>
        <end position="77"/>
    </location>
    <ligand>
        <name>substrate</name>
    </ligand>
</feature>
<feature type="binding site" evidence="1">
    <location>
        <begin position="94"/>
        <end position="95"/>
    </location>
    <ligand>
        <name>substrate</name>
    </ligand>
</feature>
<evidence type="ECO:0000255" key="1">
    <source>
        <dbReference type="HAMAP-Rule" id="MF_00818"/>
    </source>
</evidence>
<name>QUEF_STRMU</name>
<gene>
    <name evidence="1" type="primary">queF</name>
    <name type="ordered locus">SMU_915c</name>
</gene>
<sequence>MSQEEIKDLTLLGNQKTNYNFDYDLNILEAFDNRHQDNDYFIKFNCPEFTSLCPITGQPDFATIYLSYIPDKKCVESKSLKLYLFSYRNHGDFHENCINTIGKDLVDLLQPRYLEVWGKFTPRGGISIDPYYNYGRPNTKYEEMAAYRLMNHDLYPETIDNR</sequence>
<comment type="function">
    <text evidence="1">Catalyzes the NADPH-dependent reduction of 7-cyano-7-deazaguanine (preQ0) to 7-aminomethyl-7-deazaguanine (preQ1).</text>
</comment>
<comment type="catalytic activity">
    <reaction evidence="1">
        <text>7-aminomethyl-7-carbaguanine + 2 NADP(+) = 7-cyano-7-deazaguanine + 2 NADPH + 3 H(+)</text>
        <dbReference type="Rhea" id="RHEA:13409"/>
        <dbReference type="ChEBI" id="CHEBI:15378"/>
        <dbReference type="ChEBI" id="CHEBI:45075"/>
        <dbReference type="ChEBI" id="CHEBI:57783"/>
        <dbReference type="ChEBI" id="CHEBI:58349"/>
        <dbReference type="ChEBI" id="CHEBI:58703"/>
        <dbReference type="EC" id="1.7.1.13"/>
    </reaction>
</comment>
<comment type="pathway">
    <text evidence="1">tRNA modification; tRNA-queuosine biosynthesis.</text>
</comment>
<comment type="subcellular location">
    <subcellularLocation>
        <location evidence="1">Cytoplasm</location>
    </subcellularLocation>
</comment>
<comment type="similarity">
    <text evidence="1">Belongs to the GTP cyclohydrolase I family. QueF type 1 subfamily.</text>
</comment>
<dbReference type="EC" id="1.7.1.13" evidence="1"/>
<dbReference type="EMBL" id="AE014133">
    <property type="protein sequence ID" value="AAN58623.1"/>
    <property type="molecule type" value="Genomic_DNA"/>
</dbReference>
<dbReference type="RefSeq" id="NP_721317.1">
    <property type="nucleotide sequence ID" value="NC_004350.2"/>
</dbReference>
<dbReference type="RefSeq" id="WP_002263288.1">
    <property type="nucleotide sequence ID" value="NC_004350.2"/>
</dbReference>
<dbReference type="SMR" id="Q8DUL0"/>
<dbReference type="STRING" id="210007.SMU_915c"/>
<dbReference type="KEGG" id="smu:SMU_915c"/>
<dbReference type="PATRIC" id="fig|210007.7.peg.816"/>
<dbReference type="eggNOG" id="COG0780">
    <property type="taxonomic scope" value="Bacteria"/>
</dbReference>
<dbReference type="HOGENOM" id="CLU_102489_0_1_9"/>
<dbReference type="OrthoDB" id="9795077at2"/>
<dbReference type="PhylomeDB" id="Q8DUL0"/>
<dbReference type="UniPathway" id="UPA00392"/>
<dbReference type="Proteomes" id="UP000002512">
    <property type="component" value="Chromosome"/>
</dbReference>
<dbReference type="GO" id="GO:0005737">
    <property type="term" value="C:cytoplasm"/>
    <property type="evidence" value="ECO:0007669"/>
    <property type="project" value="UniProtKB-SubCell"/>
</dbReference>
<dbReference type="GO" id="GO:0033739">
    <property type="term" value="F:preQ1 synthase activity"/>
    <property type="evidence" value="ECO:0007669"/>
    <property type="project" value="UniProtKB-UniRule"/>
</dbReference>
<dbReference type="GO" id="GO:0008616">
    <property type="term" value="P:queuosine biosynthetic process"/>
    <property type="evidence" value="ECO:0007669"/>
    <property type="project" value="UniProtKB-UniRule"/>
</dbReference>
<dbReference type="GO" id="GO:0006400">
    <property type="term" value="P:tRNA modification"/>
    <property type="evidence" value="ECO:0007669"/>
    <property type="project" value="UniProtKB-UniRule"/>
</dbReference>
<dbReference type="Gene3D" id="3.30.1130.10">
    <property type="match status" value="1"/>
</dbReference>
<dbReference type="HAMAP" id="MF_00818">
    <property type="entry name" value="QueF_type1"/>
    <property type="match status" value="1"/>
</dbReference>
<dbReference type="InterPro" id="IPR043133">
    <property type="entry name" value="GTP-CH-I_C/QueF"/>
</dbReference>
<dbReference type="InterPro" id="IPR050084">
    <property type="entry name" value="NADPH_dep_7-cyano-7-deazaG_red"/>
</dbReference>
<dbReference type="InterPro" id="IPR029500">
    <property type="entry name" value="QueF"/>
</dbReference>
<dbReference type="InterPro" id="IPR016856">
    <property type="entry name" value="QueF_type1"/>
</dbReference>
<dbReference type="NCBIfam" id="TIGR03139">
    <property type="entry name" value="QueF-II"/>
    <property type="match status" value="1"/>
</dbReference>
<dbReference type="PANTHER" id="PTHR34354">
    <property type="entry name" value="NADPH-DEPENDENT 7-CYANO-7-DEAZAGUANINE REDUCTASE"/>
    <property type="match status" value="1"/>
</dbReference>
<dbReference type="PANTHER" id="PTHR34354:SF1">
    <property type="entry name" value="NADPH-DEPENDENT 7-CYANO-7-DEAZAGUANINE REDUCTASE"/>
    <property type="match status" value="1"/>
</dbReference>
<dbReference type="Pfam" id="PF14489">
    <property type="entry name" value="QueF"/>
    <property type="match status" value="1"/>
</dbReference>
<dbReference type="PIRSF" id="PIRSF027377">
    <property type="entry name" value="Nitrile_oxidored_QueF"/>
    <property type="match status" value="1"/>
</dbReference>
<dbReference type="SUPFAM" id="SSF55620">
    <property type="entry name" value="Tetrahydrobiopterin biosynthesis enzymes-like"/>
    <property type="match status" value="1"/>
</dbReference>
<accession>Q8DUL0</accession>
<keyword id="KW-0963">Cytoplasm</keyword>
<keyword id="KW-0521">NADP</keyword>
<keyword id="KW-0560">Oxidoreductase</keyword>
<keyword id="KW-0671">Queuosine biosynthesis</keyword>
<keyword id="KW-1185">Reference proteome</keyword>
<reference key="1">
    <citation type="journal article" date="2002" name="Proc. Natl. Acad. Sci. U.S.A.">
        <title>Genome sequence of Streptococcus mutans UA159, a cariogenic dental pathogen.</title>
        <authorList>
            <person name="Ajdic D.J."/>
            <person name="McShan W.M."/>
            <person name="McLaughlin R.E."/>
            <person name="Savic G."/>
            <person name="Chang J."/>
            <person name="Carson M.B."/>
            <person name="Primeaux C."/>
            <person name="Tian R."/>
            <person name="Kenton S."/>
            <person name="Jia H.G."/>
            <person name="Lin S.P."/>
            <person name="Qian Y."/>
            <person name="Li S."/>
            <person name="Zhu H."/>
            <person name="Najar F.Z."/>
            <person name="Lai H."/>
            <person name="White J."/>
            <person name="Roe B.A."/>
            <person name="Ferretti J.J."/>
        </authorList>
    </citation>
    <scope>NUCLEOTIDE SEQUENCE [LARGE SCALE GENOMIC DNA]</scope>
    <source>
        <strain>ATCC 700610 / UA159</strain>
    </source>
</reference>
<proteinExistence type="inferred from homology"/>
<organism>
    <name type="scientific">Streptococcus mutans serotype c (strain ATCC 700610 / UA159)</name>
    <dbReference type="NCBI Taxonomy" id="210007"/>
    <lineage>
        <taxon>Bacteria</taxon>
        <taxon>Bacillati</taxon>
        <taxon>Bacillota</taxon>
        <taxon>Bacilli</taxon>
        <taxon>Lactobacillales</taxon>
        <taxon>Streptococcaceae</taxon>
        <taxon>Streptococcus</taxon>
    </lineage>
</organism>